<protein>
    <recommendedName>
        <fullName evidence="7">RNA-binding protein VTS1</fullName>
    </recommendedName>
    <alternativeName>
        <fullName>VTI1-2 suppressor protein 1</fullName>
    </alternativeName>
</protein>
<feature type="chain" id="PRO_0000081458" description="RNA-binding protein VTS1">
    <location>
        <begin position="1"/>
        <end position="523"/>
    </location>
</feature>
<feature type="domain" description="SAM">
    <location>
        <begin position="451"/>
        <end position="512"/>
    </location>
</feature>
<feature type="region of interest" description="Disordered" evidence="2">
    <location>
        <begin position="1"/>
        <end position="57"/>
    </location>
</feature>
<feature type="region of interest" description="Disordered" evidence="2">
    <location>
        <begin position="85"/>
        <end position="105"/>
    </location>
</feature>
<feature type="region of interest" description="Disordered" evidence="2">
    <location>
        <begin position="150"/>
        <end position="187"/>
    </location>
</feature>
<feature type="region of interest" description="Disordered" evidence="2">
    <location>
        <begin position="305"/>
        <end position="448"/>
    </location>
</feature>
<feature type="compositionally biased region" description="Low complexity" evidence="2">
    <location>
        <begin position="37"/>
        <end position="53"/>
    </location>
</feature>
<feature type="compositionally biased region" description="Low complexity" evidence="2">
    <location>
        <begin position="90"/>
        <end position="101"/>
    </location>
</feature>
<feature type="compositionally biased region" description="Polar residues" evidence="2">
    <location>
        <begin position="150"/>
        <end position="162"/>
    </location>
</feature>
<feature type="compositionally biased region" description="Low complexity" evidence="2">
    <location>
        <begin position="167"/>
        <end position="178"/>
    </location>
</feature>
<feature type="compositionally biased region" description="Polar residues" evidence="2">
    <location>
        <begin position="316"/>
        <end position="335"/>
    </location>
</feature>
<feature type="compositionally biased region" description="Low complexity" evidence="2">
    <location>
        <begin position="348"/>
        <end position="359"/>
    </location>
</feature>
<feature type="compositionally biased region" description="Basic residues" evidence="2">
    <location>
        <begin position="374"/>
        <end position="383"/>
    </location>
</feature>
<feature type="compositionally biased region" description="Polar residues" evidence="2">
    <location>
        <begin position="385"/>
        <end position="415"/>
    </location>
</feature>
<feature type="compositionally biased region" description="Low complexity" evidence="2">
    <location>
        <begin position="417"/>
        <end position="441"/>
    </location>
</feature>
<feature type="mutagenesis site" description="Loss of RNA-binding." evidence="4">
    <original>K</original>
    <variation>Q</variation>
    <location>
        <position position="467"/>
    </location>
</feature>
<feature type="mutagenesis site" description="Loss of RNA-binding." evidence="4">
    <original>A</original>
    <variation>Q</variation>
    <location>
        <position position="498"/>
    </location>
</feature>
<feature type="helix" evidence="9">
    <location>
        <begin position="444"/>
        <end position="447"/>
    </location>
</feature>
<feature type="helix" evidence="9">
    <location>
        <begin position="450"/>
        <end position="453"/>
    </location>
</feature>
<feature type="helix" evidence="9">
    <location>
        <begin position="456"/>
        <end position="462"/>
    </location>
</feature>
<feature type="helix" evidence="9">
    <location>
        <begin position="466"/>
        <end position="468"/>
    </location>
</feature>
<feature type="helix" evidence="9">
    <location>
        <begin position="469"/>
        <end position="472"/>
    </location>
</feature>
<feature type="helix" evidence="9">
    <location>
        <begin position="477"/>
        <end position="480"/>
    </location>
</feature>
<feature type="helix" evidence="9">
    <location>
        <begin position="485"/>
        <end position="490"/>
    </location>
</feature>
<feature type="helix" evidence="9">
    <location>
        <begin position="496"/>
        <end position="514"/>
    </location>
</feature>
<feature type="helix" evidence="9">
    <location>
        <begin position="520"/>
        <end position="522"/>
    </location>
</feature>
<proteinExistence type="evidence at protein level"/>
<comment type="function">
    <text evidence="4">RNA-binding protein involved in post-transcriptional regulation through transcript degradation of SRE (SMG-recognition elements) bearing mRNAs.</text>
</comment>
<comment type="subunit">
    <text>Monomer. Binds to RNA.</text>
</comment>
<comment type="subcellular location">
    <subcellularLocation>
        <location evidence="3 5">Cytoplasm</location>
        <location evidence="3 5">Cytosol</location>
    </subcellularLocation>
    <subcellularLocation>
        <location evidence="1">Cytoplasm</location>
        <location evidence="1">P-body</location>
    </subcellularLocation>
</comment>
<comment type="domain">
    <text evidence="4">The SAM domain is essential for RNA-binding.</text>
</comment>
<comment type="miscellaneous">
    <text evidence="6">Present with 3200 molecules/cell in log phase SD medium.</text>
</comment>
<comment type="similarity">
    <text evidence="8">Belongs to the VTS1 family.</text>
</comment>
<name>VTS1_YEAST</name>
<dbReference type="EMBL" id="Z75267">
    <property type="protein sequence ID" value="CAA99688.1"/>
    <property type="molecule type" value="Genomic_DNA"/>
</dbReference>
<dbReference type="EMBL" id="BK006948">
    <property type="protein sequence ID" value="DAA11120.1"/>
    <property type="molecule type" value="Genomic_DNA"/>
</dbReference>
<dbReference type="PIR" id="S67271">
    <property type="entry name" value="S67271"/>
</dbReference>
<dbReference type="RefSeq" id="NP_015004.3">
    <property type="nucleotide sequence ID" value="NM_001183779.3"/>
</dbReference>
<dbReference type="PDB" id="2B6G">
    <property type="method" value="NMR"/>
    <property type="chains" value="A=407-523"/>
</dbReference>
<dbReference type="PDB" id="2D3D">
    <property type="method" value="X-ray"/>
    <property type="resolution" value="1.60 A"/>
    <property type="chains" value="A=436-523"/>
</dbReference>
<dbReference type="PDB" id="2ES6">
    <property type="method" value="NMR"/>
    <property type="chains" value="A=373-523"/>
</dbReference>
<dbReference type="PDB" id="2ESE">
    <property type="method" value="NMR"/>
    <property type="chains" value="A=373-523"/>
</dbReference>
<dbReference type="PDB" id="2F8K">
    <property type="method" value="X-ray"/>
    <property type="resolution" value="2.00 A"/>
    <property type="chains" value="A=436-523"/>
</dbReference>
<dbReference type="PDB" id="2FE9">
    <property type="method" value="NMR"/>
    <property type="chains" value="A=438-523"/>
</dbReference>
<dbReference type="PDBsum" id="2B6G"/>
<dbReference type="PDBsum" id="2D3D"/>
<dbReference type="PDBsum" id="2ES6"/>
<dbReference type="PDBsum" id="2ESE"/>
<dbReference type="PDBsum" id="2F8K"/>
<dbReference type="PDBsum" id="2FE9"/>
<dbReference type="BMRB" id="Q08831"/>
<dbReference type="SMR" id="Q08831"/>
<dbReference type="BioGRID" id="34744">
    <property type="interactions" value="509"/>
</dbReference>
<dbReference type="DIP" id="DIP-1279N"/>
<dbReference type="FunCoup" id="Q08831">
    <property type="interactions" value="76"/>
</dbReference>
<dbReference type="IntAct" id="Q08831">
    <property type="interactions" value="13"/>
</dbReference>
<dbReference type="MINT" id="Q08831"/>
<dbReference type="STRING" id="4932.YOR359W"/>
<dbReference type="TCDB" id="1.F.1.1.2">
    <property type="family name" value="the synaptosomal vesicle fusion pore (svf-pore) family"/>
</dbReference>
<dbReference type="GlyGen" id="Q08831">
    <property type="glycosylation" value="2 sites, 1 O-linked glycan (1 site)"/>
</dbReference>
<dbReference type="iPTMnet" id="Q08831"/>
<dbReference type="PaxDb" id="4932-YOR359W"/>
<dbReference type="PeptideAtlas" id="Q08831"/>
<dbReference type="EnsemblFungi" id="YOR359W_mRNA">
    <property type="protein sequence ID" value="YOR359W"/>
    <property type="gene ID" value="YOR359W"/>
</dbReference>
<dbReference type="GeneID" id="854541"/>
<dbReference type="KEGG" id="sce:YOR359W"/>
<dbReference type="AGR" id="SGD:S000005886"/>
<dbReference type="SGD" id="S000005886">
    <property type="gene designation" value="VTS1"/>
</dbReference>
<dbReference type="VEuPathDB" id="FungiDB:YOR359W"/>
<dbReference type="eggNOG" id="KOG3791">
    <property type="taxonomic scope" value="Eukaryota"/>
</dbReference>
<dbReference type="GeneTree" id="ENSGT00940000169155"/>
<dbReference type="HOGENOM" id="CLU_595905_0_0_1"/>
<dbReference type="InParanoid" id="Q08831"/>
<dbReference type="OMA" id="QQNTVMD"/>
<dbReference type="OrthoDB" id="2155283at2759"/>
<dbReference type="BioCyc" id="YEAST:G3O-33830-MONOMER"/>
<dbReference type="BioGRID-ORCS" id="854541">
    <property type="hits" value="9 hits in 10 CRISPR screens"/>
</dbReference>
<dbReference type="CD-CODE" id="A777E0F8">
    <property type="entry name" value="P-body"/>
</dbReference>
<dbReference type="EvolutionaryTrace" id="Q08831"/>
<dbReference type="PRO" id="PR:Q08831"/>
<dbReference type="Proteomes" id="UP000002311">
    <property type="component" value="Chromosome XV"/>
</dbReference>
<dbReference type="RNAct" id="Q08831">
    <property type="molecule type" value="protein"/>
</dbReference>
<dbReference type="GO" id="GO:0005829">
    <property type="term" value="C:cytosol"/>
    <property type="evidence" value="ECO:0000314"/>
    <property type="project" value="SGD"/>
</dbReference>
<dbReference type="GO" id="GO:0005634">
    <property type="term" value="C:nucleus"/>
    <property type="evidence" value="ECO:0000314"/>
    <property type="project" value="SGD"/>
</dbReference>
<dbReference type="GO" id="GO:0000932">
    <property type="term" value="C:P-body"/>
    <property type="evidence" value="ECO:0000314"/>
    <property type="project" value="SGD"/>
</dbReference>
<dbReference type="GO" id="GO:0070336">
    <property type="term" value="F:flap-structured DNA binding"/>
    <property type="evidence" value="ECO:0000314"/>
    <property type="project" value="SGD"/>
</dbReference>
<dbReference type="GO" id="GO:0003729">
    <property type="term" value="F:mRNA binding"/>
    <property type="evidence" value="ECO:0000318"/>
    <property type="project" value="GO_Central"/>
</dbReference>
<dbReference type="GO" id="GO:0000166">
    <property type="term" value="F:nucleotide binding"/>
    <property type="evidence" value="ECO:0007669"/>
    <property type="project" value="UniProtKB-KW"/>
</dbReference>
<dbReference type="GO" id="GO:0003723">
    <property type="term" value="F:RNA binding"/>
    <property type="evidence" value="ECO:0000314"/>
    <property type="project" value="SGD"/>
</dbReference>
<dbReference type="GO" id="GO:0000956">
    <property type="term" value="P:nuclear-transcribed mRNA catabolic process"/>
    <property type="evidence" value="ECO:0000315"/>
    <property type="project" value="SGD"/>
</dbReference>
<dbReference type="GO" id="GO:0000289">
    <property type="term" value="P:nuclear-transcribed mRNA poly(A) tail shortening"/>
    <property type="evidence" value="ECO:0000315"/>
    <property type="project" value="SGD"/>
</dbReference>
<dbReference type="GO" id="GO:0051054">
    <property type="term" value="P:positive regulation of DNA metabolic process"/>
    <property type="evidence" value="ECO:0000314"/>
    <property type="project" value="SGD"/>
</dbReference>
<dbReference type="GO" id="GO:0015031">
    <property type="term" value="P:protein transport"/>
    <property type="evidence" value="ECO:0007669"/>
    <property type="project" value="UniProtKB-KW"/>
</dbReference>
<dbReference type="CDD" id="cd09556">
    <property type="entry name" value="SAM_VTS1_fungal"/>
    <property type="match status" value="1"/>
</dbReference>
<dbReference type="FunFam" id="1.10.150.50:FF:000033">
    <property type="entry name" value="Protein vts1, variant"/>
    <property type="match status" value="1"/>
</dbReference>
<dbReference type="Gene3D" id="1.10.150.50">
    <property type="entry name" value="Transcription Factor, Ets-1"/>
    <property type="match status" value="1"/>
</dbReference>
<dbReference type="InterPro" id="IPR001660">
    <property type="entry name" value="SAM"/>
</dbReference>
<dbReference type="InterPro" id="IPR013761">
    <property type="entry name" value="SAM/pointed_sf"/>
</dbReference>
<dbReference type="InterPro" id="IPR050897">
    <property type="entry name" value="SMAUG/VTS1_RNA-bind"/>
</dbReference>
<dbReference type="InterPro" id="IPR037635">
    <property type="entry name" value="VTS1_SAM"/>
</dbReference>
<dbReference type="PANTHER" id="PTHR12515:SF5">
    <property type="entry name" value="PROTEIN SMAUG"/>
    <property type="match status" value="1"/>
</dbReference>
<dbReference type="PANTHER" id="PTHR12515">
    <property type="entry name" value="STERILE ALPHA MOTIF DOMAIN CONTAINING PROTEIN 4-RELATED"/>
    <property type="match status" value="1"/>
</dbReference>
<dbReference type="Pfam" id="PF07647">
    <property type="entry name" value="SAM_2"/>
    <property type="match status" value="1"/>
</dbReference>
<dbReference type="SMART" id="SM00454">
    <property type="entry name" value="SAM"/>
    <property type="match status" value="1"/>
</dbReference>
<dbReference type="SUPFAM" id="SSF47769">
    <property type="entry name" value="SAM/Pointed domain"/>
    <property type="match status" value="1"/>
</dbReference>
<sequence length="523" mass="57557">MKHPYEEFPTGSKSPYNMSRGAHPGAVLLSPQSSAINKNNPGSNSGNNQGNSSVTANVLSPQSHSMSLNDMLDQQSFMLDTAGTRAQPLQQQQQQQQQQQQASLPSLNIQTVSSTAAGSAIVSPMMQSPKALQSTLSSTSMYLDSFQRSPNNILGIPSQSGSIPLPQSRQSQQQSQSQKNDPNMGTNFSQDINQLCSWISMLNSSQQNTVMDNILSILNDDVLKYTKLKIETLTNTPFISPPLPAIASPIPNRDDTQILNIDSVFSSSPITNDPENTDNLLYQNWSPQPHSIPISQPIYDNITDASQRSKSAEPHVNSSPNLIPVQKQFNNGNSTKYKKLPSENPNYLSHSLSSSHSFFQPKKRSNMGNEYNSHHHHSLHHPLHNTTSYFSNTSRPSGTDLNKSNQNVFNNTITHPNAGPTSATSTSTSSNGNTPLSSNSSMNPKSLTDPKLLKNIPMWLKSLRLHKYSDALSGTPWIELIYLDDETLEKKGVLALGARRKLLKAFGIVIDYKERDLIDRSAY</sequence>
<gene>
    <name type="primary">VTS1</name>
    <name type="ordered locus">YOR359W</name>
</gene>
<organism>
    <name type="scientific">Saccharomyces cerevisiae (strain ATCC 204508 / S288c)</name>
    <name type="common">Baker's yeast</name>
    <dbReference type="NCBI Taxonomy" id="559292"/>
    <lineage>
        <taxon>Eukaryota</taxon>
        <taxon>Fungi</taxon>
        <taxon>Dikarya</taxon>
        <taxon>Ascomycota</taxon>
        <taxon>Saccharomycotina</taxon>
        <taxon>Saccharomycetes</taxon>
        <taxon>Saccharomycetales</taxon>
        <taxon>Saccharomycetaceae</taxon>
        <taxon>Saccharomyces</taxon>
    </lineage>
</organism>
<evidence type="ECO:0000250" key="1">
    <source>
        <dbReference type="UniProtKB" id="J9VVN9"/>
    </source>
</evidence>
<evidence type="ECO:0000256" key="2">
    <source>
        <dbReference type="SAM" id="MobiDB-lite"/>
    </source>
</evidence>
<evidence type="ECO:0000269" key="3">
    <source>
    </source>
</evidence>
<evidence type="ECO:0000269" key="4">
    <source>
    </source>
</evidence>
<evidence type="ECO:0000269" key="5">
    <source>
    </source>
</evidence>
<evidence type="ECO:0000269" key="6">
    <source>
    </source>
</evidence>
<evidence type="ECO:0000303" key="7">
    <source>
    </source>
</evidence>
<evidence type="ECO:0000305" key="8"/>
<evidence type="ECO:0007829" key="9">
    <source>
        <dbReference type="PDB" id="2D3D"/>
    </source>
</evidence>
<reference key="1">
    <citation type="journal article" date="1997" name="Nature">
        <title>The nucleotide sequence of Saccharomyces cerevisiae chromosome XV.</title>
        <authorList>
            <person name="Dujon B."/>
            <person name="Albermann K."/>
            <person name="Aldea M."/>
            <person name="Alexandraki D."/>
            <person name="Ansorge W."/>
            <person name="Arino J."/>
            <person name="Benes V."/>
            <person name="Bohn C."/>
            <person name="Bolotin-Fukuhara M."/>
            <person name="Bordonne R."/>
            <person name="Boyer J."/>
            <person name="Camasses A."/>
            <person name="Casamayor A."/>
            <person name="Casas C."/>
            <person name="Cheret G."/>
            <person name="Cziepluch C."/>
            <person name="Daignan-Fornier B."/>
            <person name="Dang V.-D."/>
            <person name="de Haan M."/>
            <person name="Delius H."/>
            <person name="Durand P."/>
            <person name="Fairhead C."/>
            <person name="Feldmann H."/>
            <person name="Gaillon L."/>
            <person name="Galisson F."/>
            <person name="Gamo F.-J."/>
            <person name="Gancedo C."/>
            <person name="Goffeau A."/>
            <person name="Goulding S.E."/>
            <person name="Grivell L.A."/>
            <person name="Habbig B."/>
            <person name="Hand N.J."/>
            <person name="Hani J."/>
            <person name="Hattenhorst U."/>
            <person name="Hebling U."/>
            <person name="Hernando Y."/>
            <person name="Herrero E."/>
            <person name="Heumann K."/>
            <person name="Hiesel R."/>
            <person name="Hilger F."/>
            <person name="Hofmann B."/>
            <person name="Hollenberg C.P."/>
            <person name="Hughes B."/>
            <person name="Jauniaux J.-C."/>
            <person name="Kalogeropoulos A."/>
            <person name="Katsoulou C."/>
            <person name="Kordes E."/>
            <person name="Lafuente M.J."/>
            <person name="Landt O."/>
            <person name="Louis E.J."/>
            <person name="Maarse A.C."/>
            <person name="Madania A."/>
            <person name="Mannhaupt G."/>
            <person name="Marck C."/>
            <person name="Martin R.P."/>
            <person name="Mewes H.-W."/>
            <person name="Michaux G."/>
            <person name="Paces V."/>
            <person name="Parle-McDermott A.G."/>
            <person name="Pearson B.M."/>
            <person name="Perrin A."/>
            <person name="Pettersson B."/>
            <person name="Poch O."/>
            <person name="Pohl T.M."/>
            <person name="Poirey R."/>
            <person name="Portetelle D."/>
            <person name="Pujol A."/>
            <person name="Purnelle B."/>
            <person name="Ramezani Rad M."/>
            <person name="Rechmann S."/>
            <person name="Schwager C."/>
            <person name="Schweizer M."/>
            <person name="Sor F."/>
            <person name="Sterky F."/>
            <person name="Tarassov I.A."/>
            <person name="Teodoru C."/>
            <person name="Tettelin H."/>
            <person name="Thierry A."/>
            <person name="Tobiasch E."/>
            <person name="Tzermia M."/>
            <person name="Uhlen M."/>
            <person name="Unseld M."/>
            <person name="Valens M."/>
            <person name="Vandenbol M."/>
            <person name="Vetter I."/>
            <person name="Vlcek C."/>
            <person name="Voet M."/>
            <person name="Volckaert G."/>
            <person name="Voss H."/>
            <person name="Wambutt R."/>
            <person name="Wedler H."/>
            <person name="Wiemann S."/>
            <person name="Winsor B."/>
            <person name="Wolfe K.H."/>
            <person name="Zollner A."/>
            <person name="Zumstein E."/>
            <person name="Kleine K."/>
        </authorList>
    </citation>
    <scope>NUCLEOTIDE SEQUENCE [LARGE SCALE GENOMIC DNA]</scope>
    <source>
        <strain>ATCC 204508 / S288c</strain>
    </source>
</reference>
<reference key="2">
    <citation type="journal article" date="2014" name="G3 (Bethesda)">
        <title>The reference genome sequence of Saccharomyces cerevisiae: Then and now.</title>
        <authorList>
            <person name="Engel S.R."/>
            <person name="Dietrich F.S."/>
            <person name="Fisk D.G."/>
            <person name="Binkley G."/>
            <person name="Balakrishnan R."/>
            <person name="Costanzo M.C."/>
            <person name="Dwight S.S."/>
            <person name="Hitz B.C."/>
            <person name="Karra K."/>
            <person name="Nash R.S."/>
            <person name="Weng S."/>
            <person name="Wong E.D."/>
            <person name="Lloyd P."/>
            <person name="Skrzypek M.S."/>
            <person name="Miyasato S.R."/>
            <person name="Simison M."/>
            <person name="Cherry J.M."/>
        </authorList>
    </citation>
    <scope>GENOME REANNOTATION</scope>
    <source>
        <strain>ATCC 204508 / S288c</strain>
    </source>
</reference>
<reference key="3">
    <citation type="journal article" date="2001" name="J. Biol. Chem.">
        <title>Genetic interactions with the yeast Q-SNARE VTI1 reveal novel functions for the R-SNARE YKT6.</title>
        <authorList>
            <person name="Dilcher M."/>
            <person name="Koehler B."/>
            <person name="von Mollard G.F."/>
        </authorList>
    </citation>
    <scope>SUBCELLULAR LOCATION</scope>
</reference>
<reference key="4">
    <citation type="journal article" date="2003" name="Nature">
        <title>Global analysis of protein localization in budding yeast.</title>
        <authorList>
            <person name="Huh W.-K."/>
            <person name="Falvo J.V."/>
            <person name="Gerke L.C."/>
            <person name="Carroll A.S."/>
            <person name="Howson R.W."/>
            <person name="Weissman J.S."/>
            <person name="O'Shea E.K."/>
        </authorList>
    </citation>
    <scope>SUBCELLULAR LOCATION [LARGE SCALE ANALYSIS]</scope>
</reference>
<reference key="5">
    <citation type="journal article" date="2003" name="Nature">
        <title>Global analysis of protein expression in yeast.</title>
        <authorList>
            <person name="Ghaemmaghami S."/>
            <person name="Huh W.-K."/>
            <person name="Bower K."/>
            <person name="Howson R.W."/>
            <person name="Belle A."/>
            <person name="Dephoure N."/>
            <person name="O'Shea E.K."/>
            <person name="Weissman J.S."/>
        </authorList>
    </citation>
    <scope>LEVEL OF PROTEIN EXPRESSION [LARGE SCALE ANALYSIS]</scope>
</reference>
<reference key="6">
    <citation type="journal article" date="2003" name="Nat. Struct. Biol.">
        <title>The RNA-binding SAM domain of Smaug defines a new family of post-transcriptional regulators.</title>
        <authorList>
            <person name="Aviv T."/>
            <person name="Lin Z."/>
            <person name="Lau S."/>
            <person name="Rendl L.M."/>
            <person name="Sicheri F."/>
            <person name="Smibert C.A."/>
        </authorList>
    </citation>
    <scope>FUNCTION</scope>
    <scope>DOMAIN</scope>
    <scope>RNA-BINDING</scope>
    <scope>MUTAGENESIS OF LYS-467 AND ALA-498</scope>
</reference>
<reference key="7">
    <citation type="journal article" date="2008" name="Mol. Cell. Proteomics">
        <title>A multidimensional chromatography technology for in-depth phosphoproteome analysis.</title>
        <authorList>
            <person name="Albuquerque C.P."/>
            <person name="Smolka M.B."/>
            <person name="Payne S.H."/>
            <person name="Bafna V."/>
            <person name="Eng J."/>
            <person name="Zhou H."/>
        </authorList>
    </citation>
    <scope>IDENTIFICATION BY MASS SPECTROMETRY [LARGE SCALE ANALYSIS]</scope>
</reference>
<reference key="8">
    <citation type="journal article" date="2009" name="Science">
        <title>Global analysis of Cdk1 substrate phosphorylation sites provides insights into evolution.</title>
        <authorList>
            <person name="Holt L.J."/>
            <person name="Tuch B.B."/>
            <person name="Villen J."/>
            <person name="Johnson A.D."/>
            <person name="Gygi S.P."/>
            <person name="Morgan D.O."/>
        </authorList>
    </citation>
    <scope>IDENTIFICATION BY MASS SPECTROMETRY [LARGE SCALE ANALYSIS]</scope>
</reference>
<accession>Q08831</accession>
<accession>D6W354</accession>
<keyword id="KW-0002">3D-structure</keyword>
<keyword id="KW-0963">Cytoplasm</keyword>
<keyword id="KW-0547">Nucleotide-binding</keyword>
<keyword id="KW-0653">Protein transport</keyword>
<keyword id="KW-1185">Reference proteome</keyword>
<keyword id="KW-0694">RNA-binding</keyword>
<keyword id="KW-0813">Transport</keyword>